<protein>
    <recommendedName>
        <fullName>Protein RecA</fullName>
    </recommendedName>
    <alternativeName>
        <fullName>Recombinase A</fullName>
    </alternativeName>
    <component>
        <recommendedName>
            <fullName>Endonuclease PI-MtuI</fullName>
            <ecNumber>3.1.-.-</ecNumber>
        </recommendedName>
        <alternativeName>
            <fullName>Mtu RecA intein</fullName>
        </alternativeName>
    </component>
</protein>
<organism>
    <name type="scientific">Mycobacterium tuberculosis (strain CDC 1551 / Oshkosh)</name>
    <dbReference type="NCBI Taxonomy" id="83331"/>
    <lineage>
        <taxon>Bacteria</taxon>
        <taxon>Bacillati</taxon>
        <taxon>Actinomycetota</taxon>
        <taxon>Actinomycetes</taxon>
        <taxon>Mycobacteriales</taxon>
        <taxon>Mycobacteriaceae</taxon>
        <taxon>Mycobacterium</taxon>
        <taxon>Mycobacterium tuberculosis complex</taxon>
    </lineage>
</organism>
<dbReference type="EC" id="3.1.-.-"/>
<dbReference type="EMBL" id="AE000516">
    <property type="protein sequence ID" value="AAK47127.1"/>
    <property type="molecule type" value="Genomic_DNA"/>
</dbReference>
<dbReference type="PIR" id="S18206">
    <property type="entry name" value="S18206"/>
</dbReference>
<dbReference type="RefSeq" id="WP_003414006.1">
    <property type="nucleotide sequence ID" value="NZ_KK341227.1"/>
</dbReference>
<dbReference type="SMR" id="P9WHJ2"/>
<dbReference type="KEGG" id="mtc:MT2806"/>
<dbReference type="PATRIC" id="fig|83331.31.peg.3024"/>
<dbReference type="HOGENOM" id="CLU_019600_0_0_11"/>
<dbReference type="Proteomes" id="UP000001020">
    <property type="component" value="Chromosome"/>
</dbReference>
<dbReference type="GO" id="GO:0005829">
    <property type="term" value="C:cytosol"/>
    <property type="evidence" value="ECO:0007669"/>
    <property type="project" value="TreeGrafter"/>
</dbReference>
<dbReference type="GO" id="GO:0005524">
    <property type="term" value="F:ATP binding"/>
    <property type="evidence" value="ECO:0007669"/>
    <property type="project" value="UniProtKB-UniRule"/>
</dbReference>
<dbReference type="GO" id="GO:0016887">
    <property type="term" value="F:ATP hydrolysis activity"/>
    <property type="evidence" value="ECO:0007669"/>
    <property type="project" value="InterPro"/>
</dbReference>
<dbReference type="GO" id="GO:0140664">
    <property type="term" value="F:ATP-dependent DNA damage sensor activity"/>
    <property type="evidence" value="ECO:0007669"/>
    <property type="project" value="InterPro"/>
</dbReference>
<dbReference type="GO" id="GO:0003684">
    <property type="term" value="F:damaged DNA binding"/>
    <property type="evidence" value="ECO:0007669"/>
    <property type="project" value="UniProtKB-UniRule"/>
</dbReference>
<dbReference type="GO" id="GO:0004519">
    <property type="term" value="F:endonuclease activity"/>
    <property type="evidence" value="ECO:0007669"/>
    <property type="project" value="UniProtKB-KW"/>
</dbReference>
<dbReference type="GO" id="GO:0003697">
    <property type="term" value="F:single-stranded DNA binding"/>
    <property type="evidence" value="ECO:0007669"/>
    <property type="project" value="UniProtKB-UniRule"/>
</dbReference>
<dbReference type="GO" id="GO:0006281">
    <property type="term" value="P:DNA repair"/>
    <property type="evidence" value="ECO:0007669"/>
    <property type="project" value="UniProtKB-UniRule"/>
</dbReference>
<dbReference type="GO" id="GO:0016539">
    <property type="term" value="P:intein-mediated protein splicing"/>
    <property type="evidence" value="ECO:0007669"/>
    <property type="project" value="InterPro"/>
</dbReference>
<dbReference type="GO" id="GO:0006314">
    <property type="term" value="P:intron homing"/>
    <property type="evidence" value="ECO:0007669"/>
    <property type="project" value="UniProtKB-KW"/>
</dbReference>
<dbReference type="GO" id="GO:0009432">
    <property type="term" value="P:SOS response"/>
    <property type="evidence" value="ECO:0007669"/>
    <property type="project" value="UniProtKB-UniRule"/>
</dbReference>
<dbReference type="CDD" id="cd00081">
    <property type="entry name" value="Hint"/>
    <property type="match status" value="1"/>
</dbReference>
<dbReference type="CDD" id="cd00983">
    <property type="entry name" value="RecA"/>
    <property type="match status" value="1"/>
</dbReference>
<dbReference type="FunFam" id="2.170.16.10:FF:000007">
    <property type="entry name" value="Protein RecA"/>
    <property type="match status" value="1"/>
</dbReference>
<dbReference type="FunFam" id="3.10.28.10:FF:000013">
    <property type="entry name" value="Protein RecA"/>
    <property type="match status" value="1"/>
</dbReference>
<dbReference type="FunFam" id="3.30.250.10:FF:000001">
    <property type="entry name" value="Protein RecA"/>
    <property type="match status" value="1"/>
</dbReference>
<dbReference type="FunFam" id="3.40.50.300:FF:002436">
    <property type="entry name" value="Protein RecA"/>
    <property type="match status" value="1"/>
</dbReference>
<dbReference type="Gene3D" id="2.170.16.10">
    <property type="entry name" value="Hedgehog/Intein (Hint) domain"/>
    <property type="match status" value="2"/>
</dbReference>
<dbReference type="Gene3D" id="3.10.28.10">
    <property type="entry name" value="Homing endonucleases"/>
    <property type="match status" value="1"/>
</dbReference>
<dbReference type="Gene3D" id="3.40.50.300">
    <property type="entry name" value="P-loop containing nucleotide triphosphate hydrolases"/>
    <property type="match status" value="1"/>
</dbReference>
<dbReference type="Gene3D" id="3.30.250.10">
    <property type="entry name" value="RecA protein, C-terminal domain"/>
    <property type="match status" value="1"/>
</dbReference>
<dbReference type="HAMAP" id="MF_00268">
    <property type="entry name" value="RecA"/>
    <property type="match status" value="1"/>
</dbReference>
<dbReference type="InterPro" id="IPR003593">
    <property type="entry name" value="AAA+_ATPase"/>
</dbReference>
<dbReference type="InterPro" id="IPR013765">
    <property type="entry name" value="DNA_recomb/repair_RecA"/>
</dbReference>
<dbReference type="InterPro" id="IPR020584">
    <property type="entry name" value="DNA_recomb/repair_RecA_CS"/>
</dbReference>
<dbReference type="InterPro" id="IPR003586">
    <property type="entry name" value="Hint_dom_C"/>
</dbReference>
<dbReference type="InterPro" id="IPR003587">
    <property type="entry name" value="Hint_dom_N"/>
</dbReference>
<dbReference type="InterPro" id="IPR036844">
    <property type="entry name" value="Hint_dom_sf"/>
</dbReference>
<dbReference type="InterPro" id="IPR027434">
    <property type="entry name" value="Homing_endonucl"/>
</dbReference>
<dbReference type="InterPro" id="IPR006142">
    <property type="entry name" value="INTEIN"/>
</dbReference>
<dbReference type="InterPro" id="IPR030934">
    <property type="entry name" value="Intein_C"/>
</dbReference>
<dbReference type="InterPro" id="IPR004042">
    <property type="entry name" value="Intein_endonuc_central"/>
</dbReference>
<dbReference type="InterPro" id="IPR006141">
    <property type="entry name" value="Intein_N"/>
</dbReference>
<dbReference type="InterPro" id="IPR004860">
    <property type="entry name" value="LAGLIDADG_dom"/>
</dbReference>
<dbReference type="InterPro" id="IPR027417">
    <property type="entry name" value="P-loop_NTPase"/>
</dbReference>
<dbReference type="InterPro" id="IPR049261">
    <property type="entry name" value="RecA-like_C"/>
</dbReference>
<dbReference type="InterPro" id="IPR049428">
    <property type="entry name" value="RecA-like_N"/>
</dbReference>
<dbReference type="InterPro" id="IPR020588">
    <property type="entry name" value="RecA_ATP-bd"/>
</dbReference>
<dbReference type="InterPro" id="IPR023400">
    <property type="entry name" value="RecA_C_sf"/>
</dbReference>
<dbReference type="InterPro" id="IPR020587">
    <property type="entry name" value="RecA_monomer-monomer_interface"/>
</dbReference>
<dbReference type="NCBIfam" id="TIGR01443">
    <property type="entry name" value="intein_Cterm"/>
    <property type="match status" value="1"/>
</dbReference>
<dbReference type="NCBIfam" id="TIGR01445">
    <property type="entry name" value="intein_Nterm"/>
    <property type="match status" value="1"/>
</dbReference>
<dbReference type="NCBIfam" id="NF007072">
    <property type="entry name" value="PRK09519.1"/>
    <property type="match status" value="1"/>
</dbReference>
<dbReference type="NCBIfam" id="TIGR02012">
    <property type="entry name" value="tigrfam_recA"/>
    <property type="match status" value="1"/>
</dbReference>
<dbReference type="PANTHER" id="PTHR45900:SF1">
    <property type="entry name" value="MITOCHONDRIAL DNA REPAIR PROTEIN RECA HOMOLOG-RELATED"/>
    <property type="match status" value="1"/>
</dbReference>
<dbReference type="PANTHER" id="PTHR45900">
    <property type="entry name" value="RECA"/>
    <property type="match status" value="1"/>
</dbReference>
<dbReference type="Pfam" id="PF14890">
    <property type="entry name" value="Intein_splicing"/>
    <property type="match status" value="1"/>
</dbReference>
<dbReference type="Pfam" id="PF14528">
    <property type="entry name" value="LAGLIDADG_3"/>
    <property type="match status" value="1"/>
</dbReference>
<dbReference type="Pfam" id="PF00154">
    <property type="entry name" value="RecA"/>
    <property type="match status" value="1"/>
</dbReference>
<dbReference type="Pfam" id="PF21096">
    <property type="entry name" value="RecA_C"/>
    <property type="match status" value="1"/>
</dbReference>
<dbReference type="PRINTS" id="PR00379">
    <property type="entry name" value="INTEIN"/>
</dbReference>
<dbReference type="PRINTS" id="PR00142">
    <property type="entry name" value="RECA"/>
</dbReference>
<dbReference type="SMART" id="SM00382">
    <property type="entry name" value="AAA"/>
    <property type="match status" value="1"/>
</dbReference>
<dbReference type="SMART" id="SM00305">
    <property type="entry name" value="HintC"/>
    <property type="match status" value="1"/>
</dbReference>
<dbReference type="SMART" id="SM00306">
    <property type="entry name" value="HintN"/>
    <property type="match status" value="1"/>
</dbReference>
<dbReference type="SUPFAM" id="SSF51294">
    <property type="entry name" value="Hedgehog/intein (Hint) domain"/>
    <property type="match status" value="1"/>
</dbReference>
<dbReference type="SUPFAM" id="SSF55608">
    <property type="entry name" value="Homing endonucleases"/>
    <property type="match status" value="1"/>
</dbReference>
<dbReference type="SUPFAM" id="SSF52540">
    <property type="entry name" value="P-loop containing nucleoside triphosphate hydrolases"/>
    <property type="match status" value="1"/>
</dbReference>
<dbReference type="SUPFAM" id="SSF54752">
    <property type="entry name" value="RecA protein, C-terminal domain"/>
    <property type="match status" value="1"/>
</dbReference>
<dbReference type="PROSITE" id="PS50818">
    <property type="entry name" value="INTEIN_C_TER"/>
    <property type="match status" value="1"/>
</dbReference>
<dbReference type="PROSITE" id="PS50819">
    <property type="entry name" value="INTEIN_ENDONUCLEASE"/>
    <property type="match status" value="1"/>
</dbReference>
<dbReference type="PROSITE" id="PS50817">
    <property type="entry name" value="INTEIN_N_TER"/>
    <property type="match status" value="1"/>
</dbReference>
<dbReference type="PROSITE" id="PS00321">
    <property type="entry name" value="RECA_1"/>
    <property type="match status" value="1"/>
</dbReference>
<dbReference type="PROSITE" id="PS50162">
    <property type="entry name" value="RECA_2"/>
    <property type="match status" value="1"/>
</dbReference>
<dbReference type="PROSITE" id="PS50163">
    <property type="entry name" value="RECA_3"/>
    <property type="match status" value="2"/>
</dbReference>
<reference key="1">
    <citation type="journal article" date="2002" name="J. Bacteriol.">
        <title>Whole-genome comparison of Mycobacterium tuberculosis clinical and laboratory strains.</title>
        <authorList>
            <person name="Fleischmann R.D."/>
            <person name="Alland D."/>
            <person name="Eisen J.A."/>
            <person name="Carpenter L."/>
            <person name="White O."/>
            <person name="Peterson J.D."/>
            <person name="DeBoy R.T."/>
            <person name="Dodson R.J."/>
            <person name="Gwinn M.L."/>
            <person name="Haft D.H."/>
            <person name="Hickey E.K."/>
            <person name="Kolonay J.F."/>
            <person name="Nelson W.C."/>
            <person name="Umayam L.A."/>
            <person name="Ermolaeva M.D."/>
            <person name="Salzberg S.L."/>
            <person name="Delcher A."/>
            <person name="Utterback T.R."/>
            <person name="Weidman J.F."/>
            <person name="Khouri H.M."/>
            <person name="Gill J."/>
            <person name="Mikula A."/>
            <person name="Bishai W."/>
            <person name="Jacobs W.R. Jr."/>
            <person name="Venter J.C."/>
            <person name="Fraser C.M."/>
        </authorList>
    </citation>
    <scope>NUCLEOTIDE SEQUENCE [LARGE SCALE GENOMIC DNA]</scope>
    <source>
        <strain>CDC 1551 / Oshkosh</strain>
    </source>
</reference>
<proteinExistence type="inferred from homology"/>
<gene>
    <name type="primary">recA</name>
    <name type="ordered locus">MT2806</name>
</gene>
<sequence>MTQTPDREKALELAVAQIEKSYGKGSVMRLGDEARQPISVIPTGSIALDVALGIGGLPRGRVIEIYGPESSGKTTVALHAVANAQAAGGVAAFIDAEHALDPDYAKKLGVDTDSLLVSQPDTGEQALEIADMLIRSGALDIVVIDSVAALVPRAELEGEMGDSHVGLQARLMSQALRKMTGALNNSGTTAIFINQLRDKIGVMFGSPETTTGGKALKFYASVRMDVRRVETLKDGTNAVGNRTRVKVVKNKCLAEGTRIFDPVTGTTHRIEDVVDGRKPIHVVAAAKDGTLHARPVVSWFDQGTRDVIGLRIAGGAIVWATPDHKVLTEYGWRAAGELRKGDRVAQPRRFDGFGDSAPIPADHARLLGYLIGDGRDGWVGGKTPINFINVQRALIDDVTRIAATLGCAAHPQGRISLAIAHRPGERNGVADLCQQAGIYGKLAWEKTIPNWFFEPDIAADIVGNLLFGLFESDGWVSREQTGALRVGYTTTSEQLAHQIHWLLLRFGVGSTVRDYDPTQKRPSIVNGRRIQSKRQVFEVRISGMDNVTAFAESVPMWGPRGAALIQAIPEATQGRRRGSQATYLAAEMTDAVLNYLDERGVTAQEAAAMIGVASGDPRGGMKQVLGASRLRRDRVQALADALDDKFLHDMLAEELRYSVIREVLPTRRARTFDLEVEELHTLVAEGVVVHNCSPPFKQAEFDILYGKGISREGSLIDMGVDQGLIRKSGAWFTYEGEQLGQGKENARNFLVENADVADEIEKKIKEKLGIGAVVTDDPSNDGVLPAPVDF</sequence>
<accession>P9WHJ2</accession>
<accession>L0TAH5</accession>
<accession>O34519</accession>
<accession>P0A5U4</accession>
<accession>P26345</accession>
<name>RECA_MYCTO</name>
<comment type="function">
    <text evidence="1">Can catalyze the hydrolysis of ATP in the presence of single-stranded DNA, the ATP-dependent uptake of single-stranded DNA by duplex DNA, and the ATP-dependent hybridization of homologous single-stranded DNAs. It interacts with LexA causing its activation and leading to its autocatalytic cleavage (By similarity).</text>
</comment>
<comment type="function">
    <text evidence="1">PI-MtuI is an endonuclease.</text>
</comment>
<comment type="subcellular location">
    <subcellularLocation>
        <location evidence="1">Cytoplasm</location>
    </subcellularLocation>
</comment>
<comment type="PTM">
    <text evidence="1">This protein undergoes a protein self splicing that involves a post-translational excision of the intervening region (intein) followed by peptide ligation.</text>
</comment>
<comment type="similarity">
    <text evidence="2">Belongs to the RecA family.</text>
</comment>
<feature type="chain" id="PRO_0000428175" description="Protein RecA, 1st part">
    <location>
        <begin position="1"/>
        <end position="251"/>
    </location>
</feature>
<feature type="chain" id="PRO_0000428176" description="Endonuclease PI-MtuI">
    <location>
        <begin position="252"/>
        <end position="691"/>
    </location>
</feature>
<feature type="chain" id="PRO_0000428177" description="Protein RecA, 2nd part">
    <location>
        <begin position="692"/>
        <end position="790"/>
    </location>
</feature>
<feature type="domain" description="DOD-type homing endonuclease">
    <location>
        <begin position="366"/>
        <end position="508"/>
    </location>
</feature>
<feature type="binding site" evidence="1">
    <location>
        <begin position="67"/>
        <end position="74"/>
    </location>
    <ligand>
        <name>ATP</name>
        <dbReference type="ChEBI" id="CHEBI:30616"/>
    </ligand>
</feature>
<evidence type="ECO:0000250" key="1"/>
<evidence type="ECO:0000305" key="2"/>
<keyword id="KW-0067">ATP-binding</keyword>
<keyword id="KW-0068">Autocatalytic cleavage</keyword>
<keyword id="KW-0963">Cytoplasm</keyword>
<keyword id="KW-0227">DNA damage</keyword>
<keyword id="KW-0233">DNA recombination</keyword>
<keyword id="KW-0234">DNA repair</keyword>
<keyword id="KW-0238">DNA-binding</keyword>
<keyword id="KW-0255">Endonuclease</keyword>
<keyword id="KW-0378">Hydrolase</keyword>
<keyword id="KW-0404">Intron homing</keyword>
<keyword id="KW-0540">Nuclease</keyword>
<keyword id="KW-0547">Nucleotide-binding</keyword>
<keyword id="KW-0651">Protein splicing</keyword>
<keyword id="KW-1185">Reference proteome</keyword>
<keyword id="KW-0742">SOS response</keyword>